<name>HMG13_ARATH</name>
<feature type="chain" id="PRO_0000399938" description="High mobility group B protein 13">
    <location>
        <begin position="1"/>
        <end position="446"/>
    </location>
</feature>
<feature type="DNA-binding region" description="HMG box 1" evidence="1">
    <location>
        <begin position="129"/>
        <end position="197"/>
    </location>
</feature>
<feature type="DNA-binding region" description="HMG box 2" evidence="1">
    <location>
        <begin position="246"/>
        <end position="312"/>
    </location>
</feature>
<feature type="DNA-binding region" description="HMG box 3" evidence="1">
    <location>
        <begin position="372"/>
        <end position="440"/>
    </location>
</feature>
<feature type="region of interest" description="Disordered" evidence="2">
    <location>
        <begin position="1"/>
        <end position="43"/>
    </location>
</feature>
<feature type="region of interest" description="Disordered" evidence="2">
    <location>
        <begin position="110"/>
        <end position="130"/>
    </location>
</feature>
<feature type="region of interest" description="Disordered" evidence="2">
    <location>
        <begin position="349"/>
        <end position="377"/>
    </location>
</feature>
<feature type="compositionally biased region" description="Basic residues" evidence="2">
    <location>
        <begin position="11"/>
        <end position="22"/>
    </location>
</feature>
<feature type="compositionally biased region" description="Basic and acidic residues" evidence="2">
    <location>
        <begin position="349"/>
        <end position="371"/>
    </location>
</feature>
<feature type="sequence conflict" description="In Ref. 4; CAG25858/AAS79547." evidence="3" ref="4">
    <original>S</original>
    <variation>SSPLL</variation>
    <location>
        <position position="30"/>
    </location>
</feature>
<feature type="sequence conflict" description="In Ref. 4; CAG25858/AAS79547." evidence="3" ref="4">
    <original>D</original>
    <variation>G</variation>
    <location>
        <position position="35"/>
    </location>
</feature>
<feature type="sequence conflict" description="In Ref. 4; CAG25858/AAS79547." evidence="3" ref="4">
    <original>T</original>
    <variation>S</variation>
    <location>
        <position position="40"/>
    </location>
</feature>
<feature type="sequence conflict" description="In Ref. 4; CAG25858/AAS79547." evidence="3" ref="4">
    <original>T</original>
    <variation>I</variation>
    <location>
        <position position="129"/>
    </location>
</feature>
<feature type="sequence conflict" description="In Ref. 4; CAG25858/AAS79547." evidence="3" ref="4">
    <original>E</original>
    <variation>D</variation>
    <location>
        <position position="153"/>
    </location>
</feature>
<feature type="sequence conflict" description="In Ref. 4; CAG25858/AAS79547." evidence="3" ref="4">
    <original>AEH</original>
    <variation>GEQ</variation>
    <location>
        <begin position="229"/>
        <end position="231"/>
    </location>
</feature>
<feature type="sequence conflict" description="In Ref. 4; CAG25858/AAS79547." evidence="3" ref="4">
    <original>MA</original>
    <variation>IT</variation>
    <location>
        <begin position="277"/>
        <end position="278"/>
    </location>
</feature>
<feature type="sequence conflict" description="In Ref. 4; CAG25858/AAS79547." evidence="3" ref="4">
    <original>K</original>
    <variation>Q</variation>
    <location>
        <position position="289"/>
    </location>
</feature>
<feature type="sequence conflict" description="In Ref. 4; CAG25858/AAS79547." evidence="3" ref="4">
    <original>Q</original>
    <variation>K</variation>
    <location>
        <position position="295"/>
    </location>
</feature>
<feature type="sequence conflict" description="In Ref. 4; CAG25858/AAS79547." evidence="3" ref="4">
    <original>S</original>
    <variation>T</variation>
    <location>
        <position position="407"/>
    </location>
</feature>
<feature type="sequence conflict" description="In Ref. 4; CAG25858/AAS79547." evidence="3" ref="4">
    <original>E</original>
    <variation>A</variation>
    <location>
        <position position="427"/>
    </location>
</feature>
<proteinExistence type="evidence at transcript level"/>
<protein>
    <recommendedName>
        <fullName>High mobility group B protein 13</fullName>
    </recommendedName>
    <alternativeName>
        <fullName>Nucleosome/chromatin assembly factor group D 13</fullName>
    </alternativeName>
</protein>
<keyword id="KW-0238">DNA-binding</keyword>
<keyword id="KW-0539">Nucleus</keyword>
<keyword id="KW-1185">Reference proteome</keyword>
<keyword id="KW-0677">Repeat</keyword>
<comment type="subcellular location">
    <subcellularLocation>
        <location evidence="1">Nucleus</location>
    </subcellularLocation>
</comment>
<comment type="similarity">
    <text evidence="3">Belongs to the HMGB family.</text>
</comment>
<comment type="sequence caution" evidence="3">
    <conflict type="erroneous gene model prediction">
        <sequence resource="EMBL-CDS" id="AAC35540"/>
    </conflict>
</comment>
<reference key="1">
    <citation type="journal article" date="1999" name="Nature">
        <title>Sequence and analysis of chromosome 4 of the plant Arabidopsis thaliana.</title>
        <authorList>
            <person name="Mayer K.F.X."/>
            <person name="Schueller C."/>
            <person name="Wambutt R."/>
            <person name="Murphy G."/>
            <person name="Volckaert G."/>
            <person name="Pohl T."/>
            <person name="Duesterhoeft A."/>
            <person name="Stiekema W."/>
            <person name="Entian K.-D."/>
            <person name="Terryn N."/>
            <person name="Harris B."/>
            <person name="Ansorge W."/>
            <person name="Brandt P."/>
            <person name="Grivell L.A."/>
            <person name="Rieger M."/>
            <person name="Weichselgartner M."/>
            <person name="de Simone V."/>
            <person name="Obermaier B."/>
            <person name="Mache R."/>
            <person name="Mueller M."/>
            <person name="Kreis M."/>
            <person name="Delseny M."/>
            <person name="Puigdomenech P."/>
            <person name="Watson M."/>
            <person name="Schmidtheini T."/>
            <person name="Reichert B."/>
            <person name="Portetelle D."/>
            <person name="Perez-Alonso M."/>
            <person name="Boutry M."/>
            <person name="Bancroft I."/>
            <person name="Vos P."/>
            <person name="Hoheisel J."/>
            <person name="Zimmermann W."/>
            <person name="Wedler H."/>
            <person name="Ridley P."/>
            <person name="Langham S.-A."/>
            <person name="McCullagh B."/>
            <person name="Bilham L."/>
            <person name="Robben J."/>
            <person name="van der Schueren J."/>
            <person name="Grymonprez B."/>
            <person name="Chuang Y.-J."/>
            <person name="Vandenbussche F."/>
            <person name="Braeken M."/>
            <person name="Weltjens I."/>
            <person name="Voet M."/>
            <person name="Bastiaens I."/>
            <person name="Aert R."/>
            <person name="Defoor E."/>
            <person name="Weitzenegger T."/>
            <person name="Bothe G."/>
            <person name="Ramsperger U."/>
            <person name="Hilbert H."/>
            <person name="Braun M."/>
            <person name="Holzer E."/>
            <person name="Brandt A."/>
            <person name="Peters S."/>
            <person name="van Staveren M."/>
            <person name="Dirkse W."/>
            <person name="Mooijman P."/>
            <person name="Klein Lankhorst R."/>
            <person name="Rose M."/>
            <person name="Hauf J."/>
            <person name="Koetter P."/>
            <person name="Berneiser S."/>
            <person name="Hempel S."/>
            <person name="Feldpausch M."/>
            <person name="Lamberth S."/>
            <person name="Van den Daele H."/>
            <person name="De Keyser A."/>
            <person name="Buysshaert C."/>
            <person name="Gielen J."/>
            <person name="Villarroel R."/>
            <person name="De Clercq R."/>
            <person name="van Montagu M."/>
            <person name="Rogers J."/>
            <person name="Cronin A."/>
            <person name="Quail M.A."/>
            <person name="Bray-Allen S."/>
            <person name="Clark L."/>
            <person name="Doggett J."/>
            <person name="Hall S."/>
            <person name="Kay M."/>
            <person name="Lennard N."/>
            <person name="McLay K."/>
            <person name="Mayes R."/>
            <person name="Pettett A."/>
            <person name="Rajandream M.A."/>
            <person name="Lyne M."/>
            <person name="Benes V."/>
            <person name="Rechmann S."/>
            <person name="Borkova D."/>
            <person name="Bloecker H."/>
            <person name="Scharfe M."/>
            <person name="Grimm M."/>
            <person name="Loehnert T.-H."/>
            <person name="Dose S."/>
            <person name="de Haan M."/>
            <person name="Maarse A.C."/>
            <person name="Schaefer M."/>
            <person name="Mueller-Auer S."/>
            <person name="Gabel C."/>
            <person name="Fuchs M."/>
            <person name="Fartmann B."/>
            <person name="Granderath K."/>
            <person name="Dauner D."/>
            <person name="Herzl A."/>
            <person name="Neumann S."/>
            <person name="Argiriou A."/>
            <person name="Vitale D."/>
            <person name="Liguori R."/>
            <person name="Piravandi E."/>
            <person name="Massenet O."/>
            <person name="Quigley F."/>
            <person name="Clabauld G."/>
            <person name="Muendlein A."/>
            <person name="Felber R."/>
            <person name="Schnabl S."/>
            <person name="Hiller R."/>
            <person name="Schmidt W."/>
            <person name="Lecharny A."/>
            <person name="Aubourg S."/>
            <person name="Chefdor F."/>
            <person name="Cooke R."/>
            <person name="Berger C."/>
            <person name="Monfort A."/>
            <person name="Casacuberta E."/>
            <person name="Gibbons T."/>
            <person name="Weber N."/>
            <person name="Vandenbol M."/>
            <person name="Bargues M."/>
            <person name="Terol J."/>
            <person name="Torres A."/>
            <person name="Perez-Perez A."/>
            <person name="Purnelle B."/>
            <person name="Bent E."/>
            <person name="Johnson S."/>
            <person name="Tacon D."/>
            <person name="Jesse T."/>
            <person name="Heijnen L."/>
            <person name="Schwarz S."/>
            <person name="Scholler P."/>
            <person name="Heber S."/>
            <person name="Francs P."/>
            <person name="Bielke C."/>
            <person name="Frishman D."/>
            <person name="Haase D."/>
            <person name="Lemcke K."/>
            <person name="Mewes H.-W."/>
            <person name="Stocker S."/>
            <person name="Zaccaria P."/>
            <person name="Bevan M."/>
            <person name="Wilson R.K."/>
            <person name="de la Bastide M."/>
            <person name="Habermann K."/>
            <person name="Parnell L."/>
            <person name="Dedhia N."/>
            <person name="Gnoj L."/>
            <person name="Schutz K."/>
            <person name="Huang E."/>
            <person name="Spiegel L."/>
            <person name="Sekhon M."/>
            <person name="Murray J."/>
            <person name="Sheet P."/>
            <person name="Cordes M."/>
            <person name="Abu-Threideh J."/>
            <person name="Stoneking T."/>
            <person name="Kalicki J."/>
            <person name="Graves T."/>
            <person name="Harmon G."/>
            <person name="Edwards J."/>
            <person name="Latreille P."/>
            <person name="Courtney L."/>
            <person name="Cloud J."/>
            <person name="Abbott A."/>
            <person name="Scott K."/>
            <person name="Johnson D."/>
            <person name="Minx P."/>
            <person name="Bentley D."/>
            <person name="Fulton B."/>
            <person name="Miller N."/>
            <person name="Greco T."/>
            <person name="Kemp K."/>
            <person name="Kramer J."/>
            <person name="Fulton L."/>
            <person name="Mardis E."/>
            <person name="Dante M."/>
            <person name="Pepin K."/>
            <person name="Hillier L.W."/>
            <person name="Nelson J."/>
            <person name="Spieth J."/>
            <person name="Ryan E."/>
            <person name="Andrews S."/>
            <person name="Geisel C."/>
            <person name="Layman D."/>
            <person name="Du H."/>
            <person name="Ali J."/>
            <person name="Berghoff A."/>
            <person name="Jones K."/>
            <person name="Drone K."/>
            <person name="Cotton M."/>
            <person name="Joshu C."/>
            <person name="Antonoiu B."/>
            <person name="Zidanic M."/>
            <person name="Strong C."/>
            <person name="Sun H."/>
            <person name="Lamar B."/>
            <person name="Yordan C."/>
            <person name="Ma P."/>
            <person name="Zhong J."/>
            <person name="Preston R."/>
            <person name="Vil D."/>
            <person name="Shekher M."/>
            <person name="Matero A."/>
            <person name="Shah R."/>
            <person name="Swaby I.K."/>
            <person name="O'Shaughnessy A."/>
            <person name="Rodriguez M."/>
            <person name="Hoffman J."/>
            <person name="Till S."/>
            <person name="Granat S."/>
            <person name="Shohdy N."/>
            <person name="Hasegawa A."/>
            <person name="Hameed A."/>
            <person name="Lodhi M."/>
            <person name="Johnson A."/>
            <person name="Chen E."/>
            <person name="Marra M.A."/>
            <person name="Martienssen R."/>
            <person name="McCombie W.R."/>
        </authorList>
    </citation>
    <scope>NUCLEOTIDE SEQUENCE [LARGE SCALE GENOMIC DNA]</scope>
    <source>
        <strain>cv. Columbia</strain>
    </source>
</reference>
<reference key="2">
    <citation type="journal article" date="2017" name="Plant J.">
        <title>Araport11: a complete reannotation of the Arabidopsis thaliana reference genome.</title>
        <authorList>
            <person name="Cheng C.Y."/>
            <person name="Krishnakumar V."/>
            <person name="Chan A.P."/>
            <person name="Thibaud-Nissen F."/>
            <person name="Schobel S."/>
            <person name="Town C.D."/>
        </authorList>
    </citation>
    <scope>GENOME REANNOTATION</scope>
    <source>
        <strain>cv. Columbia</strain>
    </source>
</reference>
<reference key="3">
    <citation type="journal article" date="2003" name="Science">
        <title>Empirical analysis of transcriptional activity in the Arabidopsis genome.</title>
        <authorList>
            <person name="Yamada K."/>
            <person name="Lim J."/>
            <person name="Dale J.M."/>
            <person name="Chen H."/>
            <person name="Shinn P."/>
            <person name="Palm C.J."/>
            <person name="Southwick A.M."/>
            <person name="Wu H.C."/>
            <person name="Kim C.J."/>
            <person name="Nguyen M."/>
            <person name="Pham P.K."/>
            <person name="Cheuk R.F."/>
            <person name="Karlin-Newmann G."/>
            <person name="Liu S.X."/>
            <person name="Lam B."/>
            <person name="Sakano H."/>
            <person name="Wu T."/>
            <person name="Yu G."/>
            <person name="Miranda M."/>
            <person name="Quach H.L."/>
            <person name="Tripp M."/>
            <person name="Chang C.H."/>
            <person name="Lee J.M."/>
            <person name="Toriumi M.J."/>
            <person name="Chan M.M."/>
            <person name="Tang C.C."/>
            <person name="Onodera C.S."/>
            <person name="Deng J.M."/>
            <person name="Akiyama K."/>
            <person name="Ansari Y."/>
            <person name="Arakawa T."/>
            <person name="Banh J."/>
            <person name="Banno F."/>
            <person name="Bowser L."/>
            <person name="Brooks S.Y."/>
            <person name="Carninci P."/>
            <person name="Chao Q."/>
            <person name="Choy N."/>
            <person name="Enju A."/>
            <person name="Goldsmith A.D."/>
            <person name="Gurjal M."/>
            <person name="Hansen N.F."/>
            <person name="Hayashizaki Y."/>
            <person name="Johnson-Hopson C."/>
            <person name="Hsuan V.W."/>
            <person name="Iida K."/>
            <person name="Karnes M."/>
            <person name="Khan S."/>
            <person name="Koesema E."/>
            <person name="Ishida J."/>
            <person name="Jiang P.X."/>
            <person name="Jones T."/>
            <person name="Kawai J."/>
            <person name="Kamiya A."/>
            <person name="Meyers C."/>
            <person name="Nakajima M."/>
            <person name="Narusaka M."/>
            <person name="Seki M."/>
            <person name="Sakurai T."/>
            <person name="Satou M."/>
            <person name="Tamse R."/>
            <person name="Vaysberg M."/>
            <person name="Wallender E.K."/>
            <person name="Wong C."/>
            <person name="Yamamura Y."/>
            <person name="Yuan S."/>
            <person name="Shinozaki K."/>
            <person name="Davis R.W."/>
            <person name="Theologis A."/>
            <person name="Ecker J.R."/>
        </authorList>
    </citation>
    <scope>NUCLEOTIDE SEQUENCE [LARGE SCALE MRNA]</scope>
    <source>
        <strain>cv. Columbia</strain>
    </source>
</reference>
<reference key="4">
    <citation type="journal article" date="2004" name="Plant Physiol.">
        <title>Genome-wide ORFeome cloning and analysis of Arabidopsis transcription factor genes.</title>
        <authorList>
            <person name="Gong W."/>
            <person name="Shen Y.-P."/>
            <person name="Ma L.-G."/>
            <person name="Pan Y."/>
            <person name="Du Y.-L."/>
            <person name="Wang D.-H."/>
            <person name="Yang J.-Y."/>
            <person name="Hu L.-D."/>
            <person name="Liu X.-F."/>
            <person name="Dong C.-X."/>
            <person name="Ma L."/>
            <person name="Chen Y.-H."/>
            <person name="Yang X.-Y."/>
            <person name="Gao Y."/>
            <person name="Zhu D."/>
            <person name="Tan X."/>
            <person name="Mu J.-Y."/>
            <person name="Zhang D.-B."/>
            <person name="Liu Y.-L."/>
            <person name="Dinesh-Kumar S.P."/>
            <person name="Li Y."/>
            <person name="Wang X.-P."/>
            <person name="Gu H.-Y."/>
            <person name="Qu L.-J."/>
            <person name="Bai S.-N."/>
            <person name="Lu Y.-T."/>
            <person name="Li J.-Y."/>
            <person name="Zhao J.-D."/>
            <person name="Zuo J."/>
            <person name="Huang H."/>
            <person name="Deng X.-W."/>
            <person name="Zhu Y.-X."/>
        </authorList>
    </citation>
    <scope>NUCLEOTIDE SEQUENCE [LARGE SCALE MRNA]</scope>
    <source>
        <strain>cv. Columbia</strain>
    </source>
</reference>
<sequence length="446" mass="52303">MSTVSSDPAHAKKSRNSRKALKQKNEIVESSPVSDKGKETKSFEKDLMEMQAMLEKMKIEKEKTEDLLKEKDEILRKKEVEQEKLKTELKKLQKMKEFKPNMTFAFSQSLAQTEEEKKGKKKKKDCAETKRPSTPYILWCKDNWNEVKKQNPEADFKETSNILGAKWKGISAEEKKPYEEKYQADKEAYLQVITKEKREREAMKLLDDEQKQKTAMELLDQYLHFVQEAEHDNKKKAKKIKDPLKPKQPISAYLIYANERRAALKGENKSVIEVAKMAGEEWKNLSEEKKAPYDQMAKKNKEIYLQEMEGYKRTKEEEAMSQKKEEEEFMKLHKQEALQLLKKKEKTDNIIKKTKETAKNKKKNENVDPNKPKKPTSSYFLFCKDARKSVLEEHPGINNSTVTAHISLKWMELGEEEKQVYNSKAAELMEAYKKEVEEYNKTKTSS</sequence>
<evidence type="ECO:0000255" key="1">
    <source>
        <dbReference type="PROSITE-ProRule" id="PRU00267"/>
    </source>
</evidence>
<evidence type="ECO:0000256" key="2">
    <source>
        <dbReference type="SAM" id="MobiDB-lite"/>
    </source>
</evidence>
<evidence type="ECO:0000305" key="3"/>
<organism>
    <name type="scientific">Arabidopsis thaliana</name>
    <name type="common">Mouse-ear cress</name>
    <dbReference type="NCBI Taxonomy" id="3702"/>
    <lineage>
        <taxon>Eukaryota</taxon>
        <taxon>Viridiplantae</taxon>
        <taxon>Streptophyta</taxon>
        <taxon>Embryophyta</taxon>
        <taxon>Tracheophyta</taxon>
        <taxon>Spermatophyta</taxon>
        <taxon>Magnoliopsida</taxon>
        <taxon>eudicotyledons</taxon>
        <taxon>Gunneridae</taxon>
        <taxon>Pentapetalae</taxon>
        <taxon>rosids</taxon>
        <taxon>malvids</taxon>
        <taxon>Brassicales</taxon>
        <taxon>Brassicaceae</taxon>
        <taxon>Camelineae</taxon>
        <taxon>Arabidopsis</taxon>
    </lineage>
</organism>
<dbReference type="EMBL" id="AF080120">
    <property type="protein sequence ID" value="AAC35540.1"/>
    <property type="status" value="ALT_SEQ"/>
    <property type="molecule type" value="Genomic_DNA"/>
</dbReference>
<dbReference type="EMBL" id="AL049876">
    <property type="protein sequence ID" value="CAB43043.1"/>
    <property type="molecule type" value="Genomic_DNA"/>
</dbReference>
<dbReference type="EMBL" id="AL161531">
    <property type="protein sequence ID" value="CAB81209.1"/>
    <property type="molecule type" value="Genomic_DNA"/>
</dbReference>
<dbReference type="EMBL" id="CP002687">
    <property type="protein sequence ID" value="AEE82970.1"/>
    <property type="molecule type" value="Genomic_DNA"/>
</dbReference>
<dbReference type="EMBL" id="AY133687">
    <property type="protein sequence ID" value="AAM91621.1"/>
    <property type="molecule type" value="mRNA"/>
</dbReference>
<dbReference type="EMBL" id="AJ630485">
    <property type="protein sequence ID" value="CAG25858.1"/>
    <property type="molecule type" value="mRNA"/>
</dbReference>
<dbReference type="EMBL" id="AY568657">
    <property type="protein sequence ID" value="AAS79547.1"/>
    <property type="molecule type" value="mRNA"/>
</dbReference>
<dbReference type="PIR" id="T01926">
    <property type="entry name" value="T01926"/>
</dbReference>
<dbReference type="PIR" id="T08187">
    <property type="entry name" value="T08187"/>
</dbReference>
<dbReference type="SMR" id="Q9T012"/>
<dbReference type="BioGRID" id="12008">
    <property type="interactions" value="1"/>
</dbReference>
<dbReference type="FunCoup" id="Q9T012">
    <property type="interactions" value="232"/>
</dbReference>
<dbReference type="IntAct" id="Q9T012">
    <property type="interactions" value="1"/>
</dbReference>
<dbReference type="STRING" id="3702.Q9T012"/>
<dbReference type="iPTMnet" id="Q9T012"/>
<dbReference type="PaxDb" id="3702-AT4G11080.1"/>
<dbReference type="EnsemblPlants" id="AT4G11080.1">
    <property type="protein sequence ID" value="AT4G11080.1"/>
    <property type="gene ID" value="AT4G11080"/>
</dbReference>
<dbReference type="GeneID" id="826709"/>
<dbReference type="Gramene" id="AT4G11080.1">
    <property type="protein sequence ID" value="AT4G11080.1"/>
    <property type="gene ID" value="AT4G11080"/>
</dbReference>
<dbReference type="KEGG" id="ath:AT4G11080"/>
<dbReference type="Araport" id="AT4G11080"/>
<dbReference type="TAIR" id="AT4G11080">
    <property type="gene designation" value="3XHMG-BOX1"/>
</dbReference>
<dbReference type="eggNOG" id="KOG0381">
    <property type="taxonomic scope" value="Eukaryota"/>
</dbReference>
<dbReference type="HOGENOM" id="CLU_041972_2_0_1"/>
<dbReference type="InParanoid" id="Q9T012"/>
<dbReference type="OMA" id="LWLKDQW"/>
<dbReference type="PhylomeDB" id="Q9T012"/>
<dbReference type="PRO" id="PR:Q9T012"/>
<dbReference type="Proteomes" id="UP000006548">
    <property type="component" value="Chromosome 4"/>
</dbReference>
<dbReference type="ExpressionAtlas" id="Q9T012">
    <property type="expression patterns" value="baseline and differential"/>
</dbReference>
<dbReference type="GO" id="GO:0005634">
    <property type="term" value="C:nucleus"/>
    <property type="evidence" value="ECO:0007669"/>
    <property type="project" value="UniProtKB-SubCell"/>
</dbReference>
<dbReference type="GO" id="GO:0003677">
    <property type="term" value="F:DNA binding"/>
    <property type="evidence" value="ECO:0007669"/>
    <property type="project" value="UniProtKB-KW"/>
</dbReference>
<dbReference type="GO" id="GO:0003700">
    <property type="term" value="F:DNA-binding transcription factor activity"/>
    <property type="evidence" value="ECO:0000250"/>
    <property type="project" value="TAIR"/>
</dbReference>
<dbReference type="CDD" id="cd22006">
    <property type="entry name" value="HMG-box_AtHMGB6-like_rpt1"/>
    <property type="match status" value="1"/>
</dbReference>
<dbReference type="CDD" id="cd22007">
    <property type="entry name" value="HMG-box_AtHMGB6-like_rpt2"/>
    <property type="match status" value="1"/>
</dbReference>
<dbReference type="CDD" id="cd22008">
    <property type="entry name" value="HMG-box_AtHMGB6-like_rpt3"/>
    <property type="match status" value="1"/>
</dbReference>
<dbReference type="FunFam" id="1.10.30.10:FF:000083">
    <property type="entry name" value="High mobility group B protein 13"/>
    <property type="match status" value="1"/>
</dbReference>
<dbReference type="FunFam" id="1.10.30.10:FF:000092">
    <property type="entry name" value="High mobility group B protein 13"/>
    <property type="match status" value="1"/>
</dbReference>
<dbReference type="Gene3D" id="1.10.30.10">
    <property type="entry name" value="High mobility group box domain"/>
    <property type="match status" value="3"/>
</dbReference>
<dbReference type="InterPro" id="IPR009071">
    <property type="entry name" value="HMG_box_dom"/>
</dbReference>
<dbReference type="InterPro" id="IPR036910">
    <property type="entry name" value="HMG_box_dom_sf"/>
</dbReference>
<dbReference type="InterPro" id="IPR044601">
    <property type="entry name" value="HMGB6/HMGB13"/>
</dbReference>
<dbReference type="PANTHER" id="PTHR46912">
    <property type="entry name" value="HIGH MOBILITY GROUP B PROTEIN 13"/>
    <property type="match status" value="1"/>
</dbReference>
<dbReference type="PANTHER" id="PTHR46912:SF1">
    <property type="entry name" value="HIGH MOBILITY GROUP B PROTEIN 13"/>
    <property type="match status" value="1"/>
</dbReference>
<dbReference type="Pfam" id="PF00505">
    <property type="entry name" value="HMG_box"/>
    <property type="match status" value="3"/>
</dbReference>
<dbReference type="SMART" id="SM00398">
    <property type="entry name" value="HMG"/>
    <property type="match status" value="3"/>
</dbReference>
<dbReference type="SUPFAM" id="SSF47095">
    <property type="entry name" value="HMG-box"/>
    <property type="match status" value="3"/>
</dbReference>
<dbReference type="PROSITE" id="PS50118">
    <property type="entry name" value="HMG_BOX_2"/>
    <property type="match status" value="3"/>
</dbReference>
<gene>
    <name type="primary">HMGB13</name>
    <name type="synonym">NFD13</name>
    <name type="ordered locus">At4g11080</name>
    <name type="ORF">F2P3.3</name>
    <name type="ORF">T22B4.60</name>
</gene>
<accession>Q9T012</accession>
<accession>O82510</accession>
<accession>Q700E0</accession>